<comment type="function">
    <text evidence="1">Produces ATP from ADP in the presence of a proton gradient across the membrane. The gamma chain is believed to be important in regulating ATPase activity and the flow of protons through the CF(0) complex.</text>
</comment>
<comment type="subunit">
    <text evidence="1">F-type ATPases have 2 components, CF(1) - the catalytic core - and CF(0) - the membrane proton channel. CF(1) has five subunits: alpha(3), beta(3), gamma(1), delta(1), epsilon(1). CF(0) has three main subunits: a, b and c.</text>
</comment>
<comment type="subcellular location">
    <subcellularLocation>
        <location evidence="1">Cell inner membrane</location>
        <topology evidence="1">Peripheral membrane protein</topology>
    </subcellularLocation>
</comment>
<comment type="similarity">
    <text evidence="1">Belongs to the ATPase gamma chain family.</text>
</comment>
<organism>
    <name type="scientific">Paracoccus denitrificans (strain Pd 1222)</name>
    <dbReference type="NCBI Taxonomy" id="318586"/>
    <lineage>
        <taxon>Bacteria</taxon>
        <taxon>Pseudomonadati</taxon>
        <taxon>Pseudomonadota</taxon>
        <taxon>Alphaproteobacteria</taxon>
        <taxon>Rhodobacterales</taxon>
        <taxon>Paracoccaceae</taxon>
        <taxon>Paracoccus</taxon>
    </lineage>
</organism>
<keyword id="KW-0002">3D-structure</keyword>
<keyword id="KW-0066">ATP synthesis</keyword>
<keyword id="KW-0997">Cell inner membrane</keyword>
<keyword id="KW-1003">Cell membrane</keyword>
<keyword id="KW-0139">CF(1)</keyword>
<keyword id="KW-0375">Hydrogen ion transport</keyword>
<keyword id="KW-0406">Ion transport</keyword>
<keyword id="KW-0472">Membrane</keyword>
<keyword id="KW-1185">Reference proteome</keyword>
<keyword id="KW-0813">Transport</keyword>
<proteinExistence type="evidence at protein level"/>
<accession>A1B8N9</accession>
<protein>
    <recommendedName>
        <fullName evidence="1">ATP synthase gamma chain</fullName>
    </recommendedName>
    <alternativeName>
        <fullName evidence="1">ATP synthase F1 sector gamma subunit</fullName>
    </alternativeName>
    <alternativeName>
        <fullName evidence="1">F-ATPase gamma subunit</fullName>
    </alternativeName>
</protein>
<dbReference type="EMBL" id="CP000490">
    <property type="protein sequence ID" value="ABL71883.1"/>
    <property type="molecule type" value="Genomic_DNA"/>
</dbReference>
<dbReference type="RefSeq" id="WP_011750052.1">
    <property type="nucleotide sequence ID" value="NC_008687.1"/>
</dbReference>
<dbReference type="PDB" id="5DN6">
    <property type="method" value="X-ray"/>
    <property type="resolution" value="3.98 A"/>
    <property type="chains" value="G=1-290"/>
</dbReference>
<dbReference type="PDBsum" id="5DN6"/>
<dbReference type="SMR" id="A1B8N9"/>
<dbReference type="STRING" id="318586.Pden_3817"/>
<dbReference type="TCDB" id="3.A.2.1.7">
    <property type="family name" value="the h+- or na+-translocating f-type, v-type and a-type atpase (f-atpase) superfamily"/>
</dbReference>
<dbReference type="EnsemblBacteria" id="ABL71883">
    <property type="protein sequence ID" value="ABL71883"/>
    <property type="gene ID" value="Pden_3817"/>
</dbReference>
<dbReference type="GeneID" id="93453479"/>
<dbReference type="KEGG" id="pde:Pden_3817"/>
<dbReference type="eggNOG" id="COG0224">
    <property type="taxonomic scope" value="Bacteria"/>
</dbReference>
<dbReference type="HOGENOM" id="CLU_050669_0_1_5"/>
<dbReference type="OrthoDB" id="9812769at2"/>
<dbReference type="Proteomes" id="UP000000361">
    <property type="component" value="Chromosome 2"/>
</dbReference>
<dbReference type="GO" id="GO:0005886">
    <property type="term" value="C:plasma membrane"/>
    <property type="evidence" value="ECO:0007669"/>
    <property type="project" value="UniProtKB-SubCell"/>
</dbReference>
<dbReference type="GO" id="GO:0045259">
    <property type="term" value="C:proton-transporting ATP synthase complex"/>
    <property type="evidence" value="ECO:0007669"/>
    <property type="project" value="UniProtKB-KW"/>
</dbReference>
<dbReference type="GO" id="GO:0005524">
    <property type="term" value="F:ATP binding"/>
    <property type="evidence" value="ECO:0007669"/>
    <property type="project" value="UniProtKB-UniRule"/>
</dbReference>
<dbReference type="GO" id="GO:0046933">
    <property type="term" value="F:proton-transporting ATP synthase activity, rotational mechanism"/>
    <property type="evidence" value="ECO:0007669"/>
    <property type="project" value="UniProtKB-UniRule"/>
</dbReference>
<dbReference type="GO" id="GO:0042777">
    <property type="term" value="P:proton motive force-driven plasma membrane ATP synthesis"/>
    <property type="evidence" value="ECO:0007669"/>
    <property type="project" value="UniProtKB-UniRule"/>
</dbReference>
<dbReference type="CDD" id="cd12151">
    <property type="entry name" value="F1-ATPase_gamma"/>
    <property type="match status" value="1"/>
</dbReference>
<dbReference type="FunFam" id="1.10.287.80:FF:000001">
    <property type="entry name" value="ATP synthase gamma chain"/>
    <property type="match status" value="1"/>
</dbReference>
<dbReference type="FunFam" id="1.10.287.80:FF:000003">
    <property type="entry name" value="ATP synthase gamma chain, chloroplastic"/>
    <property type="match status" value="1"/>
</dbReference>
<dbReference type="Gene3D" id="3.40.1380.10">
    <property type="match status" value="1"/>
</dbReference>
<dbReference type="Gene3D" id="1.10.287.80">
    <property type="entry name" value="ATP synthase, gamma subunit, helix hairpin domain"/>
    <property type="match status" value="1"/>
</dbReference>
<dbReference type="HAMAP" id="MF_00815">
    <property type="entry name" value="ATP_synth_gamma_bact"/>
    <property type="match status" value="1"/>
</dbReference>
<dbReference type="InterPro" id="IPR035968">
    <property type="entry name" value="ATP_synth_F1_ATPase_gsu"/>
</dbReference>
<dbReference type="InterPro" id="IPR000131">
    <property type="entry name" value="ATP_synth_F1_gsu"/>
</dbReference>
<dbReference type="InterPro" id="IPR023632">
    <property type="entry name" value="ATP_synth_F1_gsu_CS"/>
</dbReference>
<dbReference type="NCBIfam" id="TIGR01146">
    <property type="entry name" value="ATPsyn_F1gamma"/>
    <property type="match status" value="1"/>
</dbReference>
<dbReference type="NCBIfam" id="NF004146">
    <property type="entry name" value="PRK05621.1-4"/>
    <property type="match status" value="1"/>
</dbReference>
<dbReference type="PANTHER" id="PTHR11693">
    <property type="entry name" value="ATP SYNTHASE GAMMA CHAIN"/>
    <property type="match status" value="1"/>
</dbReference>
<dbReference type="PANTHER" id="PTHR11693:SF22">
    <property type="entry name" value="ATP SYNTHASE SUBUNIT GAMMA, MITOCHONDRIAL"/>
    <property type="match status" value="1"/>
</dbReference>
<dbReference type="Pfam" id="PF00231">
    <property type="entry name" value="ATP-synt"/>
    <property type="match status" value="1"/>
</dbReference>
<dbReference type="PIRSF" id="PIRSF039089">
    <property type="entry name" value="ATP_synthase_gamma"/>
    <property type="match status" value="1"/>
</dbReference>
<dbReference type="PRINTS" id="PR00126">
    <property type="entry name" value="ATPASEGAMMA"/>
</dbReference>
<dbReference type="SUPFAM" id="SSF52943">
    <property type="entry name" value="ATP synthase (F1-ATPase), gamma subunit"/>
    <property type="match status" value="1"/>
</dbReference>
<dbReference type="PROSITE" id="PS00153">
    <property type="entry name" value="ATPASE_GAMMA"/>
    <property type="match status" value="1"/>
</dbReference>
<reference key="1">
    <citation type="submission" date="2006-12" db="EMBL/GenBank/DDBJ databases">
        <title>Complete sequence of chromosome 2 of Paracoccus denitrificans PD1222.</title>
        <authorList>
            <person name="Copeland A."/>
            <person name="Lucas S."/>
            <person name="Lapidus A."/>
            <person name="Barry K."/>
            <person name="Detter J.C."/>
            <person name="Glavina del Rio T."/>
            <person name="Hammon N."/>
            <person name="Israni S."/>
            <person name="Dalin E."/>
            <person name="Tice H."/>
            <person name="Pitluck S."/>
            <person name="Munk A.C."/>
            <person name="Brettin T."/>
            <person name="Bruce D."/>
            <person name="Han C."/>
            <person name="Tapia R."/>
            <person name="Gilna P."/>
            <person name="Schmutz J."/>
            <person name="Larimer F."/>
            <person name="Land M."/>
            <person name="Hauser L."/>
            <person name="Kyrpides N."/>
            <person name="Lykidis A."/>
            <person name="Spiro S."/>
            <person name="Richardson D.J."/>
            <person name="Moir J.W.B."/>
            <person name="Ferguson S.J."/>
            <person name="van Spanning R.J.M."/>
            <person name="Richardson P."/>
        </authorList>
    </citation>
    <scope>NUCLEOTIDE SEQUENCE [LARGE SCALE GENOMIC DNA]</scope>
    <source>
        <strain>Pd 1222</strain>
    </source>
</reference>
<feature type="chain" id="PRO_1000053277" description="ATP synthase gamma chain">
    <location>
        <begin position="1"/>
        <end position="290"/>
    </location>
</feature>
<gene>
    <name evidence="1" type="primary">atpG</name>
    <name type="ordered locus">Pden_3817</name>
</gene>
<evidence type="ECO:0000255" key="1">
    <source>
        <dbReference type="HAMAP-Rule" id="MF_00815"/>
    </source>
</evidence>
<sequence length="290" mass="31599">MPSLKDLKNRIGSVKNTRKITKAMQMVAAAKLRRAQEAAEAARPYADRMAAVMAGLTAAAAGSDMAPRLLAGTGEDRRHLLVVMTSERGLAGGFNSSIVKLARLRLQELQAQGKQVSILTVGKKGREQLKREYGDLFVNHVDLSEVKRIGYDNARAIADEILDRFDNGEFDVATLFYNRFESVISQVPTARQVIPAVIEEGEAGASSLYDYEPDENAILNDLLPRSVATQVFAALLENAASEQGARMTAMDNATRNAGDMIDRLTTVYNRSRQAAITKELIEIISGAEAL</sequence>
<name>ATPG_PARDP</name>